<evidence type="ECO:0000255" key="1">
    <source>
        <dbReference type="HAMAP-Rule" id="MF_00294"/>
    </source>
</evidence>
<evidence type="ECO:0000256" key="2">
    <source>
        <dbReference type="SAM" id="MobiDB-lite"/>
    </source>
</evidence>
<evidence type="ECO:0000305" key="3"/>
<organism>
    <name type="scientific">Cupriavidus pinatubonensis (strain JMP 134 / LMG 1197)</name>
    <name type="common">Cupriavidus necator (strain JMP 134)</name>
    <dbReference type="NCBI Taxonomy" id="264198"/>
    <lineage>
        <taxon>Bacteria</taxon>
        <taxon>Pseudomonadati</taxon>
        <taxon>Pseudomonadota</taxon>
        <taxon>Betaproteobacteria</taxon>
        <taxon>Burkholderiales</taxon>
        <taxon>Burkholderiaceae</taxon>
        <taxon>Cupriavidus</taxon>
    </lineage>
</organism>
<accession>Q46XN8</accession>
<comment type="similarity">
    <text evidence="1">Belongs to the bacterial ribosomal protein bL33 family.</text>
</comment>
<name>RL33_CUPPJ</name>
<feature type="chain" id="PRO_1000004182" description="Large ribosomal subunit protein bL33">
    <location>
        <begin position="1"/>
        <end position="56"/>
    </location>
</feature>
<feature type="region of interest" description="Disordered" evidence="2">
    <location>
        <begin position="1"/>
        <end position="28"/>
    </location>
</feature>
<feature type="compositionally biased region" description="Basic and acidic residues" evidence="2">
    <location>
        <begin position="1"/>
        <end position="12"/>
    </location>
</feature>
<feature type="compositionally biased region" description="Polar residues" evidence="2">
    <location>
        <begin position="15"/>
        <end position="25"/>
    </location>
</feature>
<protein>
    <recommendedName>
        <fullName evidence="1">Large ribosomal subunit protein bL33</fullName>
    </recommendedName>
    <alternativeName>
        <fullName evidence="3">50S ribosomal protein L33</fullName>
    </alternativeName>
</protein>
<gene>
    <name evidence="1" type="primary">rpmG</name>
    <name type="ordered locus">Reut_A2734</name>
</gene>
<proteinExistence type="inferred from homology"/>
<dbReference type="EMBL" id="CP000090">
    <property type="protein sequence ID" value="AAZ62095.1"/>
    <property type="molecule type" value="Genomic_DNA"/>
</dbReference>
<dbReference type="SMR" id="Q46XN8"/>
<dbReference type="STRING" id="264198.Reut_A2734"/>
<dbReference type="KEGG" id="reu:Reut_A2734"/>
<dbReference type="eggNOG" id="COG0267">
    <property type="taxonomic scope" value="Bacteria"/>
</dbReference>
<dbReference type="HOGENOM" id="CLU_190949_1_1_4"/>
<dbReference type="OrthoDB" id="21586at2"/>
<dbReference type="GO" id="GO:0022625">
    <property type="term" value="C:cytosolic large ribosomal subunit"/>
    <property type="evidence" value="ECO:0007669"/>
    <property type="project" value="TreeGrafter"/>
</dbReference>
<dbReference type="GO" id="GO:0003735">
    <property type="term" value="F:structural constituent of ribosome"/>
    <property type="evidence" value="ECO:0007669"/>
    <property type="project" value="InterPro"/>
</dbReference>
<dbReference type="GO" id="GO:0006412">
    <property type="term" value="P:translation"/>
    <property type="evidence" value="ECO:0007669"/>
    <property type="project" value="UniProtKB-UniRule"/>
</dbReference>
<dbReference type="FunFam" id="2.20.28.120:FF:000001">
    <property type="entry name" value="50S ribosomal protein L33"/>
    <property type="match status" value="1"/>
</dbReference>
<dbReference type="Gene3D" id="2.20.28.120">
    <property type="entry name" value="Ribosomal protein L33"/>
    <property type="match status" value="1"/>
</dbReference>
<dbReference type="HAMAP" id="MF_00294">
    <property type="entry name" value="Ribosomal_bL33"/>
    <property type="match status" value="1"/>
</dbReference>
<dbReference type="InterPro" id="IPR001705">
    <property type="entry name" value="Ribosomal_bL33"/>
</dbReference>
<dbReference type="InterPro" id="IPR018264">
    <property type="entry name" value="Ribosomal_bL33_CS"/>
</dbReference>
<dbReference type="InterPro" id="IPR038584">
    <property type="entry name" value="Ribosomal_bL33_sf"/>
</dbReference>
<dbReference type="InterPro" id="IPR011332">
    <property type="entry name" value="Ribosomal_zn-bd"/>
</dbReference>
<dbReference type="NCBIfam" id="NF001860">
    <property type="entry name" value="PRK00595.1"/>
    <property type="match status" value="1"/>
</dbReference>
<dbReference type="NCBIfam" id="TIGR01023">
    <property type="entry name" value="rpmG_bact"/>
    <property type="match status" value="1"/>
</dbReference>
<dbReference type="PANTHER" id="PTHR15238">
    <property type="entry name" value="54S RIBOSOMAL PROTEIN L39, MITOCHONDRIAL"/>
    <property type="match status" value="1"/>
</dbReference>
<dbReference type="PANTHER" id="PTHR15238:SF1">
    <property type="entry name" value="LARGE RIBOSOMAL SUBUNIT PROTEIN BL33M"/>
    <property type="match status" value="1"/>
</dbReference>
<dbReference type="Pfam" id="PF00471">
    <property type="entry name" value="Ribosomal_L33"/>
    <property type="match status" value="1"/>
</dbReference>
<dbReference type="SUPFAM" id="SSF57829">
    <property type="entry name" value="Zn-binding ribosomal proteins"/>
    <property type="match status" value="1"/>
</dbReference>
<dbReference type="PROSITE" id="PS00582">
    <property type="entry name" value="RIBOSOMAL_L33"/>
    <property type="match status" value="1"/>
</dbReference>
<reference key="1">
    <citation type="journal article" date="2010" name="PLoS ONE">
        <title>The complete multipartite genome sequence of Cupriavidus necator JMP134, a versatile pollutant degrader.</title>
        <authorList>
            <person name="Lykidis A."/>
            <person name="Perez-Pantoja D."/>
            <person name="Ledger T."/>
            <person name="Mavromatis K."/>
            <person name="Anderson I.J."/>
            <person name="Ivanova N.N."/>
            <person name="Hooper S.D."/>
            <person name="Lapidus A."/>
            <person name="Lucas S."/>
            <person name="Gonzalez B."/>
            <person name="Kyrpides N.C."/>
        </authorList>
    </citation>
    <scope>NUCLEOTIDE SEQUENCE [LARGE SCALE GENOMIC DNA]</scope>
    <source>
        <strain>JMP134 / LMG 1197</strain>
    </source>
</reference>
<sequence length="56" mass="6417">MASKGGRDKIKLESTAGTGHFYTTTKNKRTMPEKMEIMKFDPVARKHVAYKETKIK</sequence>
<keyword id="KW-0687">Ribonucleoprotein</keyword>
<keyword id="KW-0689">Ribosomal protein</keyword>